<feature type="chain" id="PRO_0000131719" description="Protein translocase subunit SecY">
    <location>
        <begin position="1"/>
        <end position="457"/>
    </location>
</feature>
<feature type="transmembrane region" description="Helical" evidence="1">
    <location>
        <begin position="17"/>
        <end position="37"/>
    </location>
</feature>
<feature type="transmembrane region" description="Helical" evidence="1">
    <location>
        <begin position="75"/>
        <end position="95"/>
    </location>
</feature>
<feature type="transmembrane region" description="Helical" evidence="1">
    <location>
        <begin position="118"/>
        <end position="138"/>
    </location>
</feature>
<feature type="transmembrane region" description="Helical" evidence="1">
    <location>
        <begin position="162"/>
        <end position="182"/>
    </location>
</feature>
<feature type="transmembrane region" description="Helical" evidence="1">
    <location>
        <begin position="195"/>
        <end position="215"/>
    </location>
</feature>
<feature type="transmembrane region" description="Helical" evidence="1">
    <location>
        <begin position="230"/>
        <end position="250"/>
    </location>
</feature>
<feature type="transmembrane region" description="Helical" evidence="1">
    <location>
        <begin position="287"/>
        <end position="307"/>
    </location>
</feature>
<feature type="transmembrane region" description="Helical" evidence="1">
    <location>
        <begin position="326"/>
        <end position="346"/>
    </location>
</feature>
<feature type="transmembrane region" description="Helical" evidence="1">
    <location>
        <begin position="386"/>
        <end position="406"/>
    </location>
</feature>
<feature type="transmembrane region" description="Helical" evidence="1">
    <location>
        <begin position="412"/>
        <end position="432"/>
    </location>
</feature>
<feature type="sequence variant" description="In strain: L2/434/Bu.">
    <original>QN</original>
    <variation>RG</variation>
    <location>
        <begin position="55"/>
        <end position="56"/>
    </location>
</feature>
<feature type="sequence variant" description="In strain: L2/434/Bu.">
    <original>I</original>
    <variation>T</variation>
    <location>
        <position position="173"/>
    </location>
</feature>
<feature type="sequence variant" description="In strain: L2/434/Bu.">
    <original>M</original>
    <variation>I</variation>
    <location>
        <position position="245"/>
    </location>
</feature>
<feature type="sequence variant" description="In strain: L2/434/Bu.">
    <original>M</original>
    <variation>V</variation>
    <location>
        <position position="254"/>
    </location>
</feature>
<feature type="sequence variant" description="In strain: L2/434/Bu.">
    <original>I</original>
    <variation>V</variation>
    <location>
        <position position="401"/>
    </location>
</feature>
<feature type="sequence conflict" description="In Ref. 3; AAA23180." evidence="2" ref="3">
    <original>GS</original>
    <variation>DP</variation>
    <location>
        <begin position="221"/>
        <end position="222"/>
    </location>
</feature>
<keyword id="KW-0997">Cell inner membrane</keyword>
<keyword id="KW-1003">Cell membrane</keyword>
<keyword id="KW-0472">Membrane</keyword>
<keyword id="KW-0653">Protein transport</keyword>
<keyword id="KW-1185">Reference proteome</keyword>
<keyword id="KW-0811">Translocation</keyword>
<keyword id="KW-0812">Transmembrane</keyword>
<keyword id="KW-1133">Transmembrane helix</keyword>
<keyword id="KW-0813">Transport</keyword>
<protein>
    <recommendedName>
        <fullName evidence="1">Protein translocase subunit SecY</fullName>
    </recommendedName>
</protein>
<accession>P28539</accession>
<accession>O84517</accession>
<name>SECY_CHLTR</name>
<gene>
    <name evidence="1" type="primary">secY</name>
    <name type="ordered locus">CT_510</name>
</gene>
<sequence length="457" mass="50303">MATLRQVFSISELRQKIFFTFSLLALCRIGVFIPVPGINGDRAVAYFNQLLGSSQNLFQLADIFSGGAFAQMTVIALGVVPYISASIIVQLLVVFMPTLQREMRESPDQGKRKLGRMTRLFTLVLACVQSLLFAKFALRMNLVVPGIVLPAMLSLKLFGVPWVFYLTTVVVMITGTLLLMWVGEQISDKGIGNGISLIITLGILASFPSVLGSIFNKLNLGSQDPSEFGIVSLLILCAVFVFVLMATVLIIEGMRKIPVQHARRIIGRREVVGGGSYLPLKVNYAGVIPVIFASSLLMFPATIGQFLSSESSWLKRIATMLSPGSVAYSIFYVLLIIFFTYFWTATQFRPEQIASEMKKNGAFIPGIRQGKPTQTYLEYTMNRVTLLGAVFLAVVAILPSILGRILRVDANVSYFLGGTAMLIVVGVILDTMKQIDAFLLVRRYDGVLKKDRPKGRP</sequence>
<dbReference type="EMBL" id="L25077">
    <property type="protein sequence ID" value="AAC36888.1"/>
    <property type="molecule type" value="Unassigned_DNA"/>
</dbReference>
<dbReference type="EMBL" id="AE001273">
    <property type="protein sequence ID" value="AAC68111.1"/>
    <property type="molecule type" value="Genomic_DNA"/>
</dbReference>
<dbReference type="EMBL" id="M80325">
    <property type="protein sequence ID" value="AAA23180.1"/>
    <property type="molecule type" value="Genomic_DNA"/>
</dbReference>
<dbReference type="EMBL" id="L33834">
    <property type="protein sequence ID" value="AAA74991.1"/>
    <property type="molecule type" value="Genomic_DNA"/>
</dbReference>
<dbReference type="PIR" id="D71505">
    <property type="entry name" value="D71505"/>
</dbReference>
<dbReference type="PIR" id="I40743">
    <property type="entry name" value="I40743"/>
</dbReference>
<dbReference type="PIR" id="S44484">
    <property type="entry name" value="S44484"/>
</dbReference>
<dbReference type="RefSeq" id="NP_220025.1">
    <property type="nucleotide sequence ID" value="NC_000117.1"/>
</dbReference>
<dbReference type="RefSeq" id="WP_009871874.1">
    <property type="nucleotide sequence ID" value="NC_000117.1"/>
</dbReference>
<dbReference type="SMR" id="P28539"/>
<dbReference type="FunCoup" id="P28539">
    <property type="interactions" value="289"/>
</dbReference>
<dbReference type="STRING" id="272561.CT_510"/>
<dbReference type="EnsemblBacteria" id="AAC68111">
    <property type="protein sequence ID" value="AAC68111"/>
    <property type="gene ID" value="CT_510"/>
</dbReference>
<dbReference type="GeneID" id="884286"/>
<dbReference type="KEGG" id="ctr:CT_510"/>
<dbReference type="PATRIC" id="fig|272561.5.peg.554"/>
<dbReference type="HOGENOM" id="CLU_030313_0_1_0"/>
<dbReference type="InParanoid" id="P28539"/>
<dbReference type="OrthoDB" id="9809248at2"/>
<dbReference type="Proteomes" id="UP000000431">
    <property type="component" value="Chromosome"/>
</dbReference>
<dbReference type="GO" id="GO:0031522">
    <property type="term" value="C:cell envelope Sec protein transport complex"/>
    <property type="evidence" value="ECO:0000318"/>
    <property type="project" value="GO_Central"/>
</dbReference>
<dbReference type="GO" id="GO:0005886">
    <property type="term" value="C:plasma membrane"/>
    <property type="evidence" value="ECO:0000318"/>
    <property type="project" value="GO_Central"/>
</dbReference>
<dbReference type="GO" id="GO:0008320">
    <property type="term" value="F:protein transmembrane transporter activity"/>
    <property type="evidence" value="ECO:0000318"/>
    <property type="project" value="GO_Central"/>
</dbReference>
<dbReference type="GO" id="GO:0005048">
    <property type="term" value="F:signal sequence binding"/>
    <property type="evidence" value="ECO:0000318"/>
    <property type="project" value="GO_Central"/>
</dbReference>
<dbReference type="GO" id="GO:0043952">
    <property type="term" value="P:protein transport by the Sec complex"/>
    <property type="evidence" value="ECO:0007669"/>
    <property type="project" value="UniProtKB-UniRule"/>
</dbReference>
<dbReference type="GO" id="GO:0006616">
    <property type="term" value="P:SRP-dependent cotranslational protein targeting to membrane, translocation"/>
    <property type="evidence" value="ECO:0000318"/>
    <property type="project" value="GO_Central"/>
</dbReference>
<dbReference type="FunFam" id="1.10.3370.10:FF:000001">
    <property type="entry name" value="Preprotein translocase subunit SecY"/>
    <property type="match status" value="1"/>
</dbReference>
<dbReference type="Gene3D" id="1.10.3370.10">
    <property type="entry name" value="SecY subunit domain"/>
    <property type="match status" value="1"/>
</dbReference>
<dbReference type="HAMAP" id="MF_01465">
    <property type="entry name" value="SecY"/>
    <property type="match status" value="1"/>
</dbReference>
<dbReference type="InterPro" id="IPR026593">
    <property type="entry name" value="SecY"/>
</dbReference>
<dbReference type="InterPro" id="IPR002208">
    <property type="entry name" value="SecY/SEC61-alpha"/>
</dbReference>
<dbReference type="InterPro" id="IPR030659">
    <property type="entry name" value="SecY_CS"/>
</dbReference>
<dbReference type="InterPro" id="IPR023201">
    <property type="entry name" value="SecY_dom_sf"/>
</dbReference>
<dbReference type="NCBIfam" id="TIGR00967">
    <property type="entry name" value="3a0501s007"/>
    <property type="match status" value="1"/>
</dbReference>
<dbReference type="PANTHER" id="PTHR10906">
    <property type="entry name" value="SECY/SEC61-ALPHA FAMILY MEMBER"/>
    <property type="match status" value="1"/>
</dbReference>
<dbReference type="Pfam" id="PF00344">
    <property type="entry name" value="SecY"/>
    <property type="match status" value="1"/>
</dbReference>
<dbReference type="PIRSF" id="PIRSF004557">
    <property type="entry name" value="SecY"/>
    <property type="match status" value="1"/>
</dbReference>
<dbReference type="PRINTS" id="PR00303">
    <property type="entry name" value="SECYTRNLCASE"/>
</dbReference>
<dbReference type="SUPFAM" id="SSF103491">
    <property type="entry name" value="Preprotein translocase SecY subunit"/>
    <property type="match status" value="1"/>
</dbReference>
<dbReference type="PROSITE" id="PS00755">
    <property type="entry name" value="SECY_1"/>
    <property type="match status" value="1"/>
</dbReference>
<dbReference type="PROSITE" id="PS00756">
    <property type="entry name" value="SECY_2"/>
    <property type="match status" value="1"/>
</dbReference>
<proteinExistence type="inferred from homology"/>
<organism>
    <name type="scientific">Chlamydia trachomatis serovar D (strain ATCC VR-885 / DSM 19411 / UW-3/Cx)</name>
    <dbReference type="NCBI Taxonomy" id="272561"/>
    <lineage>
        <taxon>Bacteria</taxon>
        <taxon>Pseudomonadati</taxon>
        <taxon>Chlamydiota</taxon>
        <taxon>Chlamydiia</taxon>
        <taxon>Chlamydiales</taxon>
        <taxon>Chlamydiaceae</taxon>
        <taxon>Chlamydia/Chlamydophila group</taxon>
        <taxon>Chlamydia</taxon>
    </lineage>
</organism>
<evidence type="ECO:0000255" key="1">
    <source>
        <dbReference type="HAMAP-Rule" id="MF_01465"/>
    </source>
</evidence>
<evidence type="ECO:0000305" key="2"/>
<reference key="1">
    <citation type="journal article" date="1994" name="Mol. Gen. Genet.">
        <title>Cloning and characterization of a secY homolog from Chlamydia trachomatis.</title>
        <authorList>
            <person name="Gu L.J."/>
            <person name="Remacha M."/>
            <person name="Wenman W.M."/>
            <person name="Kaul R."/>
        </authorList>
    </citation>
    <scope>NUCLEOTIDE SEQUENCE [GENOMIC DNA]</scope>
    <source>
        <strain>L2/434/Bu</strain>
    </source>
</reference>
<reference key="2">
    <citation type="journal article" date="1998" name="Science">
        <title>Genome sequence of an obligate intracellular pathogen of humans: Chlamydia trachomatis.</title>
        <authorList>
            <person name="Stephens R.S."/>
            <person name="Kalman S."/>
            <person name="Lammel C.J."/>
            <person name="Fan J."/>
            <person name="Marathe R."/>
            <person name="Aravind L."/>
            <person name="Mitchell W.P."/>
            <person name="Olinger L."/>
            <person name="Tatusov R.L."/>
            <person name="Zhao Q."/>
            <person name="Koonin E.V."/>
            <person name="Davis R.W."/>
        </authorList>
    </citation>
    <scope>NUCLEOTIDE SEQUENCE [LARGE SCALE GENOMIC DNA]</scope>
    <source>
        <strain>ATCC VR-885 / DSM 19411 / UW-3/Cx</strain>
    </source>
</reference>
<reference key="3">
    <citation type="journal article" date="1992" name="J. Bacteriol.">
        <title>Cloning and sequence analysis of the Chlamydia trachomatis spc ribosomal protein gene cluster.</title>
        <authorList>
            <person name="Kaul R."/>
            <person name="Gray G.J."/>
            <person name="Koehncke N.R."/>
            <person name="Gu L.J."/>
        </authorList>
    </citation>
    <scope>NUCLEOTIDE SEQUENCE [GENOMIC DNA] OF 1-222</scope>
    <source>
        <strain>L2/434/Bu</strain>
    </source>
</reference>
<reference key="4">
    <citation type="journal article" date="1995" name="J. Bacteriol.">
        <title>Chlamydia trachomatis RNA polymerase alpha subunit: sequence and structural analysis.</title>
        <authorList>
            <person name="Gu L.J."/>
            <person name="Wenman W.M."/>
            <person name="Remacha M."/>
            <person name="Meuser R.U."/>
            <person name="Coffin J.M."/>
            <person name="Kaul R."/>
        </authorList>
    </citation>
    <scope>NUCLEOTIDE SEQUENCE [GENOMIC DNA] OF 224-457</scope>
    <source>
        <strain>L2/434/Bu</strain>
    </source>
</reference>
<comment type="function">
    <text evidence="1">The central subunit of the protein translocation channel SecYEG. Consists of two halves formed by TMs 1-5 and 6-10. These two domains form a lateral gate at the front which open onto the bilayer between TMs 2 and 7, and are clamped together by SecE at the back. The channel is closed by both a pore ring composed of hydrophobic SecY resides and a short helix (helix 2A) on the extracellular side of the membrane which forms a plug. The plug probably moves laterally to allow the channel to open. The ring and the pore may move independently.</text>
</comment>
<comment type="subunit">
    <text evidence="1">Component of the Sec protein translocase complex. Heterotrimer consisting of SecY, SecE and SecG subunits. The heterotrimers can form oligomers, although 1 heterotrimer is thought to be able to translocate proteins. Interacts with the ribosome. Interacts with SecDF, and other proteins may be involved. Interacts with SecA.</text>
</comment>
<comment type="subcellular location">
    <subcellularLocation>
        <location>Cell inner membrane</location>
        <topology>Multi-pass membrane protein</topology>
    </subcellularLocation>
</comment>
<comment type="similarity">
    <text evidence="1">Belongs to the SecY/SEC61-alpha family.</text>
</comment>